<sequence length="244" mass="26179">MFKRGVKIEIIPAIDILGGRCVRLFQGDYAQETVYSSDPVGTAMRWQSLGAPRLHVVDLDGAADGQSVNFELIKEIANSALIPVEVGGGIRSMETVKKLLVAGVDRVILGTAAVENPELVKEICARYADSVAVSIDARNGKVATRGWVTNTEIDALELARSMKKLGIRRFIYTDISRDGTLSEPNFAAIRDLISAINVPVIASGGVSSLSHLRLLKDIGAEGAIVGKAIYTGDLNLKRAFEDLS</sequence>
<feature type="chain" id="PRO_0000229055" description="1-(5-phosphoribosyl)-5-[(5-phosphoribosylamino)methylideneamino] imidazole-4-carboxamide isomerase">
    <location>
        <begin position="1"/>
        <end position="244"/>
    </location>
</feature>
<feature type="active site" description="Proton acceptor" evidence="1">
    <location>
        <position position="15"/>
    </location>
</feature>
<feature type="active site" description="Proton donor" evidence="1">
    <location>
        <position position="136"/>
    </location>
</feature>
<organism>
    <name type="scientific">Dehalococcoides mccartyi (strain CBDB1)</name>
    <dbReference type="NCBI Taxonomy" id="255470"/>
    <lineage>
        <taxon>Bacteria</taxon>
        <taxon>Bacillati</taxon>
        <taxon>Chloroflexota</taxon>
        <taxon>Dehalococcoidia</taxon>
        <taxon>Dehalococcoidales</taxon>
        <taxon>Dehalococcoidaceae</taxon>
        <taxon>Dehalococcoides</taxon>
    </lineage>
</organism>
<protein>
    <recommendedName>
        <fullName evidence="1">1-(5-phosphoribosyl)-5-[(5-phosphoribosylamino)methylideneamino] imidazole-4-carboxamide isomerase</fullName>
        <ecNumber evidence="1">5.3.1.16</ecNumber>
    </recommendedName>
    <alternativeName>
        <fullName evidence="1">Phosphoribosylformimino-5-aminoimidazole carboxamide ribotide isomerase</fullName>
    </alternativeName>
</protein>
<comment type="catalytic activity">
    <reaction evidence="1">
        <text>1-(5-phospho-beta-D-ribosyl)-5-[(5-phospho-beta-D-ribosylamino)methylideneamino]imidazole-4-carboxamide = 5-[(5-phospho-1-deoxy-D-ribulos-1-ylimino)methylamino]-1-(5-phospho-beta-D-ribosyl)imidazole-4-carboxamide</text>
        <dbReference type="Rhea" id="RHEA:15469"/>
        <dbReference type="ChEBI" id="CHEBI:58435"/>
        <dbReference type="ChEBI" id="CHEBI:58525"/>
        <dbReference type="EC" id="5.3.1.16"/>
    </reaction>
</comment>
<comment type="pathway">
    <text evidence="1">Amino-acid biosynthesis; L-histidine biosynthesis; L-histidine from 5-phospho-alpha-D-ribose 1-diphosphate: step 4/9.</text>
</comment>
<comment type="subcellular location">
    <subcellularLocation>
        <location evidence="1">Cytoplasm</location>
    </subcellularLocation>
</comment>
<comment type="similarity">
    <text evidence="1">Belongs to the HisA/HisF family.</text>
</comment>
<dbReference type="EC" id="5.3.1.16" evidence="1"/>
<dbReference type="EMBL" id="AJ965256">
    <property type="protein sequence ID" value="CAI83338.1"/>
    <property type="molecule type" value="Genomic_DNA"/>
</dbReference>
<dbReference type="SMR" id="Q3ZYM9"/>
<dbReference type="KEGG" id="deh:cbdbA1278"/>
<dbReference type="HOGENOM" id="CLU_048577_1_1_0"/>
<dbReference type="UniPathway" id="UPA00031">
    <property type="reaction ID" value="UER00009"/>
</dbReference>
<dbReference type="Proteomes" id="UP000000433">
    <property type="component" value="Chromosome"/>
</dbReference>
<dbReference type="GO" id="GO:0005737">
    <property type="term" value="C:cytoplasm"/>
    <property type="evidence" value="ECO:0007669"/>
    <property type="project" value="UniProtKB-SubCell"/>
</dbReference>
<dbReference type="GO" id="GO:0003949">
    <property type="term" value="F:1-(5-phosphoribosyl)-5-[(5-phosphoribosylamino)methylideneamino]imidazole-4-carboxamide isomerase activity"/>
    <property type="evidence" value="ECO:0007669"/>
    <property type="project" value="UniProtKB-UniRule"/>
</dbReference>
<dbReference type="GO" id="GO:0000105">
    <property type="term" value="P:L-histidine biosynthetic process"/>
    <property type="evidence" value="ECO:0007669"/>
    <property type="project" value="UniProtKB-UniRule"/>
</dbReference>
<dbReference type="GO" id="GO:0000162">
    <property type="term" value="P:L-tryptophan biosynthetic process"/>
    <property type="evidence" value="ECO:0007669"/>
    <property type="project" value="TreeGrafter"/>
</dbReference>
<dbReference type="CDD" id="cd04732">
    <property type="entry name" value="HisA"/>
    <property type="match status" value="1"/>
</dbReference>
<dbReference type="FunFam" id="3.20.20.70:FF:000009">
    <property type="entry name" value="1-(5-phosphoribosyl)-5-[(5-phosphoribosylamino)methylideneamino] imidazole-4-carboxamide isomerase"/>
    <property type="match status" value="1"/>
</dbReference>
<dbReference type="Gene3D" id="3.20.20.70">
    <property type="entry name" value="Aldolase class I"/>
    <property type="match status" value="1"/>
</dbReference>
<dbReference type="HAMAP" id="MF_01014">
    <property type="entry name" value="HisA"/>
    <property type="match status" value="1"/>
</dbReference>
<dbReference type="InterPro" id="IPR013785">
    <property type="entry name" value="Aldolase_TIM"/>
</dbReference>
<dbReference type="InterPro" id="IPR006062">
    <property type="entry name" value="His_biosynth"/>
</dbReference>
<dbReference type="InterPro" id="IPR006063">
    <property type="entry name" value="HisA_bact_arch"/>
</dbReference>
<dbReference type="InterPro" id="IPR044524">
    <property type="entry name" value="Isoase_HisA-like"/>
</dbReference>
<dbReference type="InterPro" id="IPR023016">
    <property type="entry name" value="Isoase_HisA-like_bact"/>
</dbReference>
<dbReference type="InterPro" id="IPR011060">
    <property type="entry name" value="RibuloseP-bd_barrel"/>
</dbReference>
<dbReference type="NCBIfam" id="TIGR00007">
    <property type="entry name" value="1-(5-phosphoribosyl)-5-[(5-phosphoribosylamino)methylideneamino]imidazole-4-carboxamide isomerase"/>
    <property type="match status" value="1"/>
</dbReference>
<dbReference type="NCBIfam" id="NF010112">
    <property type="entry name" value="PRK13585.1"/>
    <property type="match status" value="1"/>
</dbReference>
<dbReference type="PANTHER" id="PTHR43090">
    <property type="entry name" value="1-(5-PHOSPHORIBOSYL)-5-[(5-PHOSPHORIBOSYLAMINO)METHYLIDENEAMINO] IMIDAZOLE-4-CARBOXAMIDE ISOMERASE"/>
    <property type="match status" value="1"/>
</dbReference>
<dbReference type="PANTHER" id="PTHR43090:SF2">
    <property type="entry name" value="1-(5-PHOSPHORIBOSYL)-5-[(5-PHOSPHORIBOSYLAMINO)METHYLIDENEAMINO] IMIDAZOLE-4-CARBOXAMIDE ISOMERASE"/>
    <property type="match status" value="1"/>
</dbReference>
<dbReference type="Pfam" id="PF00977">
    <property type="entry name" value="His_biosynth"/>
    <property type="match status" value="1"/>
</dbReference>
<dbReference type="SUPFAM" id="SSF51366">
    <property type="entry name" value="Ribulose-phoshate binding barrel"/>
    <property type="match status" value="1"/>
</dbReference>
<evidence type="ECO:0000255" key="1">
    <source>
        <dbReference type="HAMAP-Rule" id="MF_01014"/>
    </source>
</evidence>
<gene>
    <name evidence="1" type="primary">hisA</name>
    <name type="ordered locus">cbdbA1278</name>
</gene>
<proteinExistence type="inferred from homology"/>
<name>HIS4_DEHMC</name>
<reference key="1">
    <citation type="journal article" date="2005" name="Nat. Biotechnol.">
        <title>Genome sequence of the chlorinated compound-respiring bacterium Dehalococcoides species strain CBDB1.</title>
        <authorList>
            <person name="Kube M."/>
            <person name="Beck A."/>
            <person name="Zinder S.H."/>
            <person name="Kuhl H."/>
            <person name="Reinhardt R."/>
            <person name="Adrian L."/>
        </authorList>
    </citation>
    <scope>NUCLEOTIDE SEQUENCE [LARGE SCALE GENOMIC DNA]</scope>
    <source>
        <strain>CBDB1</strain>
    </source>
</reference>
<keyword id="KW-0028">Amino-acid biosynthesis</keyword>
<keyword id="KW-0963">Cytoplasm</keyword>
<keyword id="KW-0368">Histidine biosynthesis</keyword>
<keyword id="KW-0413">Isomerase</keyword>
<accession>Q3ZYM9</accession>